<accession>B5X370</accession>
<evidence type="ECO:0000250" key="1"/>
<evidence type="ECO:0000250" key="2">
    <source>
        <dbReference type="UniProtKB" id="Q9H0E2"/>
    </source>
</evidence>
<evidence type="ECO:0000255" key="3">
    <source>
        <dbReference type="PROSITE-ProRule" id="PRU00041"/>
    </source>
</evidence>
<evidence type="ECO:0000255" key="4">
    <source>
        <dbReference type="PROSITE-ProRule" id="PRU00468"/>
    </source>
</evidence>
<evidence type="ECO:0000305" key="5"/>
<protein>
    <recommendedName>
        <fullName>Toll-interacting protein</fullName>
    </recommendedName>
</protein>
<dbReference type="EMBL" id="BT045489">
    <property type="protein sequence ID" value="ACI33751.1"/>
    <property type="molecule type" value="mRNA"/>
</dbReference>
<dbReference type="SMR" id="B5X370"/>
<dbReference type="STRING" id="8030.ENSSSAP00000062166"/>
<dbReference type="PaxDb" id="8030-ENSSSAP00000062166"/>
<dbReference type="Ensembl" id="ENSSSAT00020078183">
    <property type="protein sequence ID" value="ENSSSAP00020053235"/>
    <property type="gene ID" value="ENSSSAG00020039561"/>
</dbReference>
<dbReference type="Ensembl" id="ENSSSAT00070051771">
    <property type="protein sequence ID" value="ENSSSAP00070049651"/>
    <property type="gene ID" value="ENSSSAG00070032219"/>
</dbReference>
<dbReference type="GeneID" id="100169858"/>
<dbReference type="KEGG" id="sasa:100169858"/>
<dbReference type="OrthoDB" id="546913at7898"/>
<dbReference type="Proteomes" id="UP000087266">
    <property type="component" value="Chromosome ssa11"/>
</dbReference>
<dbReference type="Bgee" id="ENSSSAG00000043323">
    <property type="expression patterns" value="Expressed in camera-type eye and 24 other cell types or tissues"/>
</dbReference>
<dbReference type="GO" id="GO:0005769">
    <property type="term" value="C:early endosome"/>
    <property type="evidence" value="ECO:0007669"/>
    <property type="project" value="UniProtKB-SubCell"/>
</dbReference>
<dbReference type="GO" id="GO:0043130">
    <property type="term" value="F:ubiquitin binding"/>
    <property type="evidence" value="ECO:0007669"/>
    <property type="project" value="InterPro"/>
</dbReference>
<dbReference type="GO" id="GO:0031624">
    <property type="term" value="F:ubiquitin conjugating enzyme binding"/>
    <property type="evidence" value="ECO:0007669"/>
    <property type="project" value="TreeGrafter"/>
</dbReference>
<dbReference type="GO" id="GO:0006914">
    <property type="term" value="P:autophagy"/>
    <property type="evidence" value="ECO:0007669"/>
    <property type="project" value="UniProtKB-KW"/>
</dbReference>
<dbReference type="GO" id="GO:0006954">
    <property type="term" value="P:inflammatory response"/>
    <property type="evidence" value="ECO:0007669"/>
    <property type="project" value="UniProtKB-KW"/>
</dbReference>
<dbReference type="GO" id="GO:0045087">
    <property type="term" value="P:innate immune response"/>
    <property type="evidence" value="ECO:0007669"/>
    <property type="project" value="UniProtKB-KW"/>
</dbReference>
<dbReference type="GO" id="GO:0016310">
    <property type="term" value="P:phosphorylation"/>
    <property type="evidence" value="ECO:0000250"/>
    <property type="project" value="UniProtKB"/>
</dbReference>
<dbReference type="GO" id="GO:0006511">
    <property type="term" value="P:ubiquitin-dependent protein catabolic process"/>
    <property type="evidence" value="ECO:0007669"/>
    <property type="project" value="TreeGrafter"/>
</dbReference>
<dbReference type="CDD" id="cd04016">
    <property type="entry name" value="C2_Tollip"/>
    <property type="match status" value="1"/>
</dbReference>
<dbReference type="CDD" id="cd14363">
    <property type="entry name" value="CUE_TOLIP"/>
    <property type="match status" value="1"/>
</dbReference>
<dbReference type="FunFam" id="1.10.8.10:FF:000036">
    <property type="entry name" value="Toll-interacting protein-like Protein"/>
    <property type="match status" value="1"/>
</dbReference>
<dbReference type="FunFam" id="2.60.40.150:FF:000055">
    <property type="entry name" value="Toll-interacting protein-like Protein"/>
    <property type="match status" value="1"/>
</dbReference>
<dbReference type="Gene3D" id="2.60.40.150">
    <property type="entry name" value="C2 domain"/>
    <property type="match status" value="1"/>
</dbReference>
<dbReference type="Gene3D" id="1.10.8.10">
    <property type="entry name" value="DNA helicase RuvA subunit, C-terminal domain"/>
    <property type="match status" value="1"/>
</dbReference>
<dbReference type="InterPro" id="IPR000008">
    <property type="entry name" value="C2_dom"/>
</dbReference>
<dbReference type="InterPro" id="IPR035892">
    <property type="entry name" value="C2_domain_sf"/>
</dbReference>
<dbReference type="InterPro" id="IPR003892">
    <property type="entry name" value="CUE"/>
</dbReference>
<dbReference type="InterPro" id="IPR041799">
    <property type="entry name" value="TOLIP_CUE"/>
</dbReference>
<dbReference type="InterPro" id="IPR037301">
    <property type="entry name" value="Tollip_C2"/>
</dbReference>
<dbReference type="InterPro" id="IPR009060">
    <property type="entry name" value="UBA-like_sf"/>
</dbReference>
<dbReference type="PANTHER" id="PTHR16461">
    <property type="entry name" value="TOLL-INTERACTING PROTEIN"/>
    <property type="match status" value="1"/>
</dbReference>
<dbReference type="PANTHER" id="PTHR16461:SF5">
    <property type="entry name" value="TOLL-INTERACTING PROTEIN"/>
    <property type="match status" value="1"/>
</dbReference>
<dbReference type="Pfam" id="PF00168">
    <property type="entry name" value="C2"/>
    <property type="match status" value="1"/>
</dbReference>
<dbReference type="Pfam" id="PF02845">
    <property type="entry name" value="CUE"/>
    <property type="match status" value="1"/>
</dbReference>
<dbReference type="SMART" id="SM00239">
    <property type="entry name" value="C2"/>
    <property type="match status" value="1"/>
</dbReference>
<dbReference type="SMART" id="SM00546">
    <property type="entry name" value="CUE"/>
    <property type="match status" value="1"/>
</dbReference>
<dbReference type="SUPFAM" id="SSF49562">
    <property type="entry name" value="C2 domain (Calcium/lipid-binding domain, CaLB)"/>
    <property type="match status" value="1"/>
</dbReference>
<dbReference type="SUPFAM" id="SSF46934">
    <property type="entry name" value="UBA-like"/>
    <property type="match status" value="1"/>
</dbReference>
<dbReference type="PROSITE" id="PS50004">
    <property type="entry name" value="C2"/>
    <property type="match status" value="1"/>
</dbReference>
<dbReference type="PROSITE" id="PS51140">
    <property type="entry name" value="CUE"/>
    <property type="match status" value="1"/>
</dbReference>
<feature type="chain" id="PRO_0000384934" description="Toll-interacting protein">
    <location>
        <begin position="1"/>
        <end position="275"/>
    </location>
</feature>
<feature type="domain" description="C2" evidence="3">
    <location>
        <begin position="35"/>
        <end position="152"/>
    </location>
</feature>
<feature type="domain" description="CUE" evidence="4">
    <location>
        <begin position="230"/>
        <end position="273"/>
    </location>
</feature>
<feature type="short sequence motif" description="AIM1">
    <location>
        <begin position="133"/>
        <end position="136"/>
    </location>
</feature>
<feature type="short sequence motif" description="AIM2">
    <location>
        <begin position="151"/>
        <end position="154"/>
    </location>
</feature>
<keyword id="KW-0072">Autophagy</keyword>
<keyword id="KW-0963">Cytoplasm</keyword>
<keyword id="KW-0967">Endosome</keyword>
<keyword id="KW-0391">Immunity</keyword>
<keyword id="KW-0395">Inflammatory response</keyword>
<keyword id="KW-0399">Innate immunity</keyword>
<keyword id="KW-1185">Reference proteome</keyword>
<keyword id="KW-0677">Repeat</keyword>
<comment type="function">
    <text evidence="1 2">Component of the signaling pathway of IL-1 and Toll-like receptors. Inhibits cell activation by microbial products. Connects the ubiquitin pathway to autophagy by functioning as a ubiquitin-ATG8 family adapter and thus mediating autophagic clearance of ubiquitin conjugates. The TOLLIP-dependent selective autophagy pathway plays an important role in clearance of cytotoxic polyQ proteins aggregates (By similarity). In a complex with TOM1, recruits ubiquitin-conjugated proteins onto early endosomes (By similarity). Binds to phosphatidylinositol 3-phosphate (PtdIns(3)P) (By similarity).</text>
</comment>
<comment type="subunit">
    <text evidence="2">Interacts with ATG8 family proteins (via AIM motifs), and ubiquitin (via CUE domain). Found in a complex with TOM1; interacts (via N-terminus) with TOM1 (via GAT domain); the interactions leads to TOM1-recruitment to endosomes and inhibition of TOLLIP binding to PtdIns(3)P (By similarity).</text>
</comment>
<comment type="subcellular location">
    <subcellularLocation>
        <location evidence="2">Cytoplasm</location>
    </subcellularLocation>
    <subcellularLocation>
        <location evidence="2">Endosome</location>
    </subcellularLocation>
    <subcellularLocation>
        <location evidence="2">Early endosome</location>
    </subcellularLocation>
    <text evidence="2">Localized to endo/exosomal vesicles.</text>
</comment>
<comment type="domain">
    <text evidence="1">Both ATG8-interaction motifs (AIM1 and AIM2) are required for the association with ATG8 family proteins.</text>
</comment>
<comment type="domain">
    <text evidence="2">The N-terminal TOM1-binding domain (residues 1-53) is a disordered domain that partially folds when bound to the GAT domain of TOM1.</text>
</comment>
<comment type="similarity">
    <text evidence="5">Belongs to the tollip family.</text>
</comment>
<reference key="1">
    <citation type="journal article" date="2010" name="BMC Genomics">
        <title>Salmo salar and Esox lucius full-length cDNA sequences reveal changes in evolutionary pressures on a post-tetraploidization genome.</title>
        <authorList>
            <person name="Leong J.S."/>
            <person name="Jantzen S.G."/>
            <person name="von Schalburg K.R."/>
            <person name="Cooper G.A."/>
            <person name="Messmer A.M."/>
            <person name="Liao N.Y."/>
            <person name="Munro S."/>
            <person name="Moore R."/>
            <person name="Holt R.A."/>
            <person name="Jones S.J."/>
            <person name="Davidson W.S."/>
            <person name="Koop B.F."/>
        </authorList>
    </citation>
    <scope>NUCLEOTIDE SEQUENCE [LARGE SCALE MRNA]</scope>
    <source>
        <tissue>Brain</tissue>
    </source>
</reference>
<gene>
    <name type="primary">tollip</name>
</gene>
<name>TOLIP_SALSA</name>
<organism>
    <name type="scientific">Salmo salar</name>
    <name type="common">Atlantic salmon</name>
    <dbReference type="NCBI Taxonomy" id="8030"/>
    <lineage>
        <taxon>Eukaryota</taxon>
        <taxon>Metazoa</taxon>
        <taxon>Chordata</taxon>
        <taxon>Craniata</taxon>
        <taxon>Vertebrata</taxon>
        <taxon>Euteleostomi</taxon>
        <taxon>Actinopterygii</taxon>
        <taxon>Neopterygii</taxon>
        <taxon>Teleostei</taxon>
        <taxon>Protacanthopterygii</taxon>
        <taxon>Salmoniformes</taxon>
        <taxon>Salmonidae</taxon>
        <taxon>Salmoninae</taxon>
        <taxon>Salmo</taxon>
    </lineage>
</organism>
<sequence length="275" mass="30367">MSTTISTQRGQVYIGELPQDFLRITPTQQQQQVQLDAQAAQQLQYGGSLGTVGRLSITVVQAKLAKNYGMTRMDPYCRVRLGYAVYETPTAHNGAKNPRWNKVIQCTVPPGVDSFYLEIFDERAFSMDDRIAWTHVTIPEGLREGSVVDEWYSLSGRQGDDKEGMINLVMSYANMPAGMHMSPPVVLMPTVYQQGVGYVPIAGVPTVYNQGMVPMGMPAAPTVAAQEAPCSEEDLKALQDMFPNLDREVIRTVIEAQQGNKDAAINSLLQMTEEL</sequence>
<proteinExistence type="evidence at transcript level"/>